<evidence type="ECO:0000250" key="1"/>
<evidence type="ECO:0000255" key="2"/>
<evidence type="ECO:0000305" key="3"/>
<accession>P41349</accession>
<sequence>MKALQASTSYSFFSKSSSATLQRRTHRPQCVILSKVEPSDKSVEIMRKFSEQYARKSGTYFCVDKGVTSVVIKGLAEHKDSLGAPLCPCRYYDDKAAEATQGFWNCPCVPMRERKECHCMLFLTPENDFAGKDQTIGLDEIREVTANM</sequence>
<reference key="1">
    <citation type="journal article" date="1994" name="Biochim. Biophys. Acta">
        <title>Full-length cDNA sequences for both ferredoxin-thioredoxin reductase subunits from spinach (Spinacia oleracea L.).</title>
        <authorList>
            <person name="Falkenstein E."/>
            <person name="von Schaewen A."/>
            <person name="Scheibe R."/>
        </authorList>
    </citation>
    <scope>NUCLEOTIDE SEQUENCE [MRNA]</scope>
    <source>
        <tissue>Green leaf</tissue>
    </source>
</reference>
<name>FTRC2_SPIOL</name>
<proteinExistence type="evidence at transcript level"/>
<organism>
    <name type="scientific">Spinacia oleracea</name>
    <name type="common">Spinach</name>
    <dbReference type="NCBI Taxonomy" id="3562"/>
    <lineage>
        <taxon>Eukaryota</taxon>
        <taxon>Viridiplantae</taxon>
        <taxon>Streptophyta</taxon>
        <taxon>Embryophyta</taxon>
        <taxon>Tracheophyta</taxon>
        <taxon>Spermatophyta</taxon>
        <taxon>Magnoliopsida</taxon>
        <taxon>eudicotyledons</taxon>
        <taxon>Gunneridae</taxon>
        <taxon>Pentapetalae</taxon>
        <taxon>Caryophyllales</taxon>
        <taxon>Chenopodiaceae</taxon>
        <taxon>Chenopodioideae</taxon>
        <taxon>Anserineae</taxon>
        <taxon>Spinacia</taxon>
    </lineage>
</organism>
<keyword id="KW-0004">4Fe-4S</keyword>
<keyword id="KW-0150">Chloroplast</keyword>
<keyword id="KW-1015">Disulfide bond</keyword>
<keyword id="KW-0408">Iron</keyword>
<keyword id="KW-0411">Iron-sulfur</keyword>
<keyword id="KW-0479">Metal-binding</keyword>
<keyword id="KW-0560">Oxidoreductase</keyword>
<keyword id="KW-0934">Plastid</keyword>
<keyword id="KW-0676">Redox-active center</keyword>
<keyword id="KW-1185">Reference proteome</keyword>
<keyword id="KW-0809">Transit peptide</keyword>
<dbReference type="EC" id="1.8.7.2"/>
<dbReference type="EMBL" id="X77164">
    <property type="protein sequence ID" value="CAA54409.1"/>
    <property type="molecule type" value="mRNA"/>
</dbReference>
<dbReference type="PIR" id="T09150">
    <property type="entry name" value="T09150"/>
</dbReference>
<dbReference type="RefSeq" id="NP_001413382.1">
    <property type="nucleotide sequence ID" value="NM_001426453.1"/>
</dbReference>
<dbReference type="SMR" id="P41349"/>
<dbReference type="GeneID" id="110798481"/>
<dbReference type="OrthoDB" id="1641at2759"/>
<dbReference type="Proteomes" id="UP001155700">
    <property type="component" value="Unplaced"/>
</dbReference>
<dbReference type="GO" id="GO:0009507">
    <property type="term" value="C:chloroplast"/>
    <property type="evidence" value="ECO:0007669"/>
    <property type="project" value="UniProtKB-SubCell"/>
</dbReference>
<dbReference type="GO" id="GO:0051539">
    <property type="term" value="F:4 iron, 4 sulfur cluster binding"/>
    <property type="evidence" value="ECO:0000250"/>
    <property type="project" value="UniProtKB"/>
</dbReference>
<dbReference type="GO" id="GO:0009055">
    <property type="term" value="F:electron transfer activity"/>
    <property type="evidence" value="ECO:0000250"/>
    <property type="project" value="UniProtKB"/>
</dbReference>
<dbReference type="GO" id="GO:0103012">
    <property type="term" value="F:ferredoxin-thioredoxin reductase activity"/>
    <property type="evidence" value="ECO:0000250"/>
    <property type="project" value="UniProtKB"/>
</dbReference>
<dbReference type="GO" id="GO:0046872">
    <property type="term" value="F:metal ion binding"/>
    <property type="evidence" value="ECO:0007669"/>
    <property type="project" value="UniProtKB-KW"/>
</dbReference>
<dbReference type="GO" id="GO:0016730">
    <property type="term" value="F:oxidoreductase activity, acting on iron-sulfur proteins as donors"/>
    <property type="evidence" value="ECO:0007669"/>
    <property type="project" value="InterPro"/>
</dbReference>
<dbReference type="FunFam" id="3.90.460.10:FF:000001">
    <property type="entry name" value="Ferredoxin-thioredoxin reductase, catalytic chain"/>
    <property type="match status" value="1"/>
</dbReference>
<dbReference type="Gene3D" id="3.90.460.10">
    <property type="entry name" value="Ferredoxin thioredoxin reductase catalytic beta subunit"/>
    <property type="match status" value="1"/>
</dbReference>
<dbReference type="InterPro" id="IPR004209">
    <property type="entry name" value="FTR_bsu"/>
</dbReference>
<dbReference type="InterPro" id="IPR036644">
    <property type="entry name" value="FTR_bsu_sf"/>
</dbReference>
<dbReference type="PANTHER" id="PTHR35113">
    <property type="entry name" value="FERREDOXIN-THIOREDOXIN REDUCTASE CATALYTIC CHAIN, CHLOROPLASTIC"/>
    <property type="match status" value="1"/>
</dbReference>
<dbReference type="PANTHER" id="PTHR35113:SF1">
    <property type="entry name" value="FERREDOXIN-THIOREDOXIN REDUCTASE CATALYTIC CHAIN, CHLOROPLASTIC"/>
    <property type="match status" value="1"/>
</dbReference>
<dbReference type="Pfam" id="PF02943">
    <property type="entry name" value="FeThRed_B"/>
    <property type="match status" value="1"/>
</dbReference>
<dbReference type="SUPFAM" id="SSF57662">
    <property type="entry name" value="Ferredoxin thioredoxin reductase (FTR), catalytic beta chain"/>
    <property type="match status" value="1"/>
</dbReference>
<protein>
    <recommendedName>
        <fullName>Ferredoxin-thioredoxin reductase catalytic chain, chloroplastic</fullName>
        <shortName>FTR-C</shortName>
        <ecNumber>1.8.7.2</ecNumber>
    </recommendedName>
    <alternativeName>
        <fullName>B1</fullName>
    </alternativeName>
    <alternativeName>
        <fullName>Ferredoxin-thioredoxin reductase subunit B</fullName>
        <shortName>FTR-B</shortName>
    </alternativeName>
</protein>
<comment type="function">
    <text>Catalytic subunit of the ferredoxin-thioredoxin reductase (FTR), which catalyzes the two-electron reduction of thioredoxins by the electrons provided by reduced ferredoxin.</text>
</comment>
<comment type="catalytic activity">
    <reaction>
        <text>[thioredoxin]-disulfide + 2 reduced [2Fe-2S]-[ferredoxin] + 2 H(+) = [thioredoxin]-dithiol + 2 oxidized [2Fe-2S]-[ferredoxin]</text>
        <dbReference type="Rhea" id="RHEA:42336"/>
        <dbReference type="Rhea" id="RHEA-COMP:10000"/>
        <dbReference type="Rhea" id="RHEA-COMP:10001"/>
        <dbReference type="Rhea" id="RHEA-COMP:10698"/>
        <dbReference type="Rhea" id="RHEA-COMP:10700"/>
        <dbReference type="ChEBI" id="CHEBI:15378"/>
        <dbReference type="ChEBI" id="CHEBI:29950"/>
        <dbReference type="ChEBI" id="CHEBI:33737"/>
        <dbReference type="ChEBI" id="CHEBI:33738"/>
        <dbReference type="ChEBI" id="CHEBI:50058"/>
        <dbReference type="EC" id="1.8.7.2"/>
    </reaction>
</comment>
<comment type="cofactor">
    <cofactor>
        <name>[4Fe-4S] cluster</name>
        <dbReference type="ChEBI" id="CHEBI:49883"/>
    </cofactor>
    <text>Binds 1 [4Fe-4S] cluster.</text>
</comment>
<comment type="subunit">
    <text>Heterodimer of subunit A (variable subunit) and subunit B (catalytic subunit). Heterodimeric FTR forms a complex with ferredoxin and thioredoxin.</text>
</comment>
<comment type="subcellular location">
    <subcellularLocation>
        <location>Plastid</location>
        <location>Chloroplast</location>
    </subcellularLocation>
</comment>
<comment type="similarity">
    <text evidence="3">Belongs to the ferredoxin thioredoxin reductase beta subunit family.</text>
</comment>
<feature type="transit peptide" description="Chloroplast" evidence="2">
    <location>
        <begin position="1"/>
        <end position="35"/>
    </location>
</feature>
<feature type="chain" id="PRO_0000019429" description="Ferredoxin-thioredoxin reductase catalytic chain, chloroplastic">
    <location>
        <begin position="36"/>
        <end position="148"/>
    </location>
</feature>
<feature type="active site" description="Nucleophile" evidence="1">
    <location>
        <position position="89"/>
    </location>
</feature>
<feature type="binding site">
    <location>
        <position position="87"/>
    </location>
    <ligand>
        <name>[4Fe-4S] cluster</name>
        <dbReference type="ChEBI" id="CHEBI:49883"/>
    </ligand>
</feature>
<feature type="binding site">
    <location>
        <position position="106"/>
    </location>
    <ligand>
        <name>[4Fe-4S] cluster</name>
        <dbReference type="ChEBI" id="CHEBI:49883"/>
    </ligand>
</feature>
<feature type="binding site">
    <location>
        <position position="108"/>
    </location>
    <ligand>
        <name>[4Fe-4S] cluster</name>
        <dbReference type="ChEBI" id="CHEBI:49883"/>
    </ligand>
</feature>
<feature type="binding site">
    <location>
        <position position="117"/>
    </location>
    <ligand>
        <name>[4Fe-4S] cluster</name>
        <dbReference type="ChEBI" id="CHEBI:49883"/>
    </ligand>
</feature>
<feature type="site" description="Increases the nucleophilicity of the active site Cys" evidence="1">
    <location>
        <position position="118"/>
    </location>
</feature>
<feature type="disulfide bond" description="Redox-active" evidence="1">
    <location>
        <begin position="89"/>
        <end position="119"/>
    </location>
</feature>